<evidence type="ECO:0000250" key="1"/>
<evidence type="ECO:0000255" key="2"/>
<evidence type="ECO:0000269" key="3">
    <source>
    </source>
</evidence>
<evidence type="ECO:0000305" key="4"/>
<evidence type="ECO:0007829" key="5">
    <source>
        <dbReference type="PDB" id="6QQ4"/>
    </source>
</evidence>
<reference key="1">
    <citation type="journal article" date="1994" name="Neuron">
        <title>Members of a family of Drosophila putative odorant-binding proteins are expressed in different subsets of olfactory hairs.</title>
        <authorList>
            <person name="Pikielny C.W."/>
            <person name="Hasan G."/>
            <person name="Rouyer F."/>
            <person name="Rosbash M."/>
        </authorList>
    </citation>
    <scope>NUCLEOTIDE SEQUENCE [MRNA]</scope>
    <scope>TISSUE SPECIFICITY</scope>
    <source>
        <strain>Canton-S</strain>
        <tissue>Antenna</tissue>
    </source>
</reference>
<reference key="2">
    <citation type="journal article" date="2000" name="Science">
        <title>The genome sequence of Drosophila melanogaster.</title>
        <authorList>
            <person name="Adams M.D."/>
            <person name="Celniker S.E."/>
            <person name="Holt R.A."/>
            <person name="Evans C.A."/>
            <person name="Gocayne J.D."/>
            <person name="Amanatides P.G."/>
            <person name="Scherer S.E."/>
            <person name="Li P.W."/>
            <person name="Hoskins R.A."/>
            <person name="Galle R.F."/>
            <person name="George R.A."/>
            <person name="Lewis S.E."/>
            <person name="Richards S."/>
            <person name="Ashburner M."/>
            <person name="Henderson S.N."/>
            <person name="Sutton G.G."/>
            <person name="Wortman J.R."/>
            <person name="Yandell M.D."/>
            <person name="Zhang Q."/>
            <person name="Chen L.X."/>
            <person name="Brandon R.C."/>
            <person name="Rogers Y.-H.C."/>
            <person name="Blazej R.G."/>
            <person name="Champe M."/>
            <person name="Pfeiffer B.D."/>
            <person name="Wan K.H."/>
            <person name="Doyle C."/>
            <person name="Baxter E.G."/>
            <person name="Helt G."/>
            <person name="Nelson C.R."/>
            <person name="Miklos G.L.G."/>
            <person name="Abril J.F."/>
            <person name="Agbayani A."/>
            <person name="An H.-J."/>
            <person name="Andrews-Pfannkoch C."/>
            <person name="Baldwin D."/>
            <person name="Ballew R.M."/>
            <person name="Basu A."/>
            <person name="Baxendale J."/>
            <person name="Bayraktaroglu L."/>
            <person name="Beasley E.M."/>
            <person name="Beeson K.Y."/>
            <person name="Benos P.V."/>
            <person name="Berman B.P."/>
            <person name="Bhandari D."/>
            <person name="Bolshakov S."/>
            <person name="Borkova D."/>
            <person name="Botchan M.R."/>
            <person name="Bouck J."/>
            <person name="Brokstein P."/>
            <person name="Brottier P."/>
            <person name="Burtis K.C."/>
            <person name="Busam D.A."/>
            <person name="Butler H."/>
            <person name="Cadieu E."/>
            <person name="Center A."/>
            <person name="Chandra I."/>
            <person name="Cherry J.M."/>
            <person name="Cawley S."/>
            <person name="Dahlke C."/>
            <person name="Davenport L.B."/>
            <person name="Davies P."/>
            <person name="de Pablos B."/>
            <person name="Delcher A."/>
            <person name="Deng Z."/>
            <person name="Mays A.D."/>
            <person name="Dew I."/>
            <person name="Dietz S.M."/>
            <person name="Dodson K."/>
            <person name="Doup L.E."/>
            <person name="Downes M."/>
            <person name="Dugan-Rocha S."/>
            <person name="Dunkov B.C."/>
            <person name="Dunn P."/>
            <person name="Durbin K.J."/>
            <person name="Evangelista C.C."/>
            <person name="Ferraz C."/>
            <person name="Ferriera S."/>
            <person name="Fleischmann W."/>
            <person name="Fosler C."/>
            <person name="Gabrielian A.E."/>
            <person name="Garg N.S."/>
            <person name="Gelbart W.M."/>
            <person name="Glasser K."/>
            <person name="Glodek A."/>
            <person name="Gong F."/>
            <person name="Gorrell J.H."/>
            <person name="Gu Z."/>
            <person name="Guan P."/>
            <person name="Harris M."/>
            <person name="Harris N.L."/>
            <person name="Harvey D.A."/>
            <person name="Heiman T.J."/>
            <person name="Hernandez J.R."/>
            <person name="Houck J."/>
            <person name="Hostin D."/>
            <person name="Houston K.A."/>
            <person name="Howland T.J."/>
            <person name="Wei M.-H."/>
            <person name="Ibegwam C."/>
            <person name="Jalali M."/>
            <person name="Kalush F."/>
            <person name="Karpen G.H."/>
            <person name="Ke Z."/>
            <person name="Kennison J.A."/>
            <person name="Ketchum K.A."/>
            <person name="Kimmel B.E."/>
            <person name="Kodira C.D."/>
            <person name="Kraft C.L."/>
            <person name="Kravitz S."/>
            <person name="Kulp D."/>
            <person name="Lai Z."/>
            <person name="Lasko P."/>
            <person name="Lei Y."/>
            <person name="Levitsky A.A."/>
            <person name="Li J.H."/>
            <person name="Li Z."/>
            <person name="Liang Y."/>
            <person name="Lin X."/>
            <person name="Liu X."/>
            <person name="Mattei B."/>
            <person name="McIntosh T.C."/>
            <person name="McLeod M.P."/>
            <person name="McPherson D."/>
            <person name="Merkulov G."/>
            <person name="Milshina N.V."/>
            <person name="Mobarry C."/>
            <person name="Morris J."/>
            <person name="Moshrefi A."/>
            <person name="Mount S.M."/>
            <person name="Moy M."/>
            <person name="Murphy B."/>
            <person name="Murphy L."/>
            <person name="Muzny D.M."/>
            <person name="Nelson D.L."/>
            <person name="Nelson D.R."/>
            <person name="Nelson K.A."/>
            <person name="Nixon K."/>
            <person name="Nusskern D.R."/>
            <person name="Pacleb J.M."/>
            <person name="Palazzolo M."/>
            <person name="Pittman G.S."/>
            <person name="Pan S."/>
            <person name="Pollard J."/>
            <person name="Puri V."/>
            <person name="Reese M.G."/>
            <person name="Reinert K."/>
            <person name="Remington K."/>
            <person name="Saunders R.D.C."/>
            <person name="Scheeler F."/>
            <person name="Shen H."/>
            <person name="Shue B.C."/>
            <person name="Siden-Kiamos I."/>
            <person name="Simpson M."/>
            <person name="Skupski M.P."/>
            <person name="Smith T.J."/>
            <person name="Spier E."/>
            <person name="Spradling A.C."/>
            <person name="Stapleton M."/>
            <person name="Strong R."/>
            <person name="Sun E."/>
            <person name="Svirskas R."/>
            <person name="Tector C."/>
            <person name="Turner R."/>
            <person name="Venter E."/>
            <person name="Wang A.H."/>
            <person name="Wang X."/>
            <person name="Wang Z.-Y."/>
            <person name="Wassarman D.A."/>
            <person name="Weinstock G.M."/>
            <person name="Weissenbach J."/>
            <person name="Williams S.M."/>
            <person name="Woodage T."/>
            <person name="Worley K.C."/>
            <person name="Wu D."/>
            <person name="Yang S."/>
            <person name="Yao Q.A."/>
            <person name="Ye J."/>
            <person name="Yeh R.-F."/>
            <person name="Zaveri J.S."/>
            <person name="Zhan M."/>
            <person name="Zhang G."/>
            <person name="Zhao Q."/>
            <person name="Zheng L."/>
            <person name="Zheng X.H."/>
            <person name="Zhong F.N."/>
            <person name="Zhong W."/>
            <person name="Zhou X."/>
            <person name="Zhu S.C."/>
            <person name="Zhu X."/>
            <person name="Smith H.O."/>
            <person name="Gibbs R.A."/>
            <person name="Myers E.W."/>
            <person name="Rubin G.M."/>
            <person name="Venter J.C."/>
        </authorList>
    </citation>
    <scope>NUCLEOTIDE SEQUENCE [LARGE SCALE GENOMIC DNA]</scope>
    <source>
        <strain>Berkeley</strain>
    </source>
</reference>
<reference key="3">
    <citation type="journal article" date="2002" name="Genome Biol.">
        <title>Annotation of the Drosophila melanogaster euchromatic genome: a systematic review.</title>
        <authorList>
            <person name="Misra S."/>
            <person name="Crosby M.A."/>
            <person name="Mungall C.J."/>
            <person name="Matthews B.B."/>
            <person name="Campbell K.S."/>
            <person name="Hradecky P."/>
            <person name="Huang Y."/>
            <person name="Kaminker J.S."/>
            <person name="Millburn G.H."/>
            <person name="Prochnik S.E."/>
            <person name="Smith C.D."/>
            <person name="Tupy J.L."/>
            <person name="Whitfield E.J."/>
            <person name="Bayraktaroglu L."/>
            <person name="Berman B.P."/>
            <person name="Bettencourt B.R."/>
            <person name="Celniker S.E."/>
            <person name="de Grey A.D.N.J."/>
            <person name="Drysdale R.A."/>
            <person name="Harris N.L."/>
            <person name="Richter J."/>
            <person name="Russo S."/>
            <person name="Schroeder A.J."/>
            <person name="Shu S.Q."/>
            <person name="Stapleton M."/>
            <person name="Yamada C."/>
            <person name="Ashburner M."/>
            <person name="Gelbart W.M."/>
            <person name="Rubin G.M."/>
            <person name="Lewis S.E."/>
        </authorList>
    </citation>
    <scope>GENOME REANNOTATION</scope>
    <source>
        <strain>Berkeley</strain>
    </source>
</reference>
<reference key="4">
    <citation type="submission" date="2005-05" db="EMBL/GenBank/DDBJ databases">
        <authorList>
            <person name="Stapleton M."/>
            <person name="Carlson J.W."/>
            <person name="Chavez C."/>
            <person name="Frise E."/>
            <person name="George R.A."/>
            <person name="Pacleb J.M."/>
            <person name="Park S."/>
            <person name="Wan K.H."/>
            <person name="Yu C."/>
            <person name="Celniker S.E."/>
        </authorList>
    </citation>
    <scope>NUCLEOTIDE SEQUENCE [LARGE SCALE MRNA]</scope>
    <source>
        <strain>Berkeley</strain>
    </source>
</reference>
<feature type="signal peptide" evidence="2">
    <location>
        <begin position="1"/>
        <end position="21"/>
    </location>
</feature>
<feature type="chain" id="PRO_0000012590" description="General odorant-binding protein 28a">
    <location>
        <begin position="22"/>
        <end position="143"/>
    </location>
</feature>
<feature type="disulfide bond" evidence="1">
    <location>
        <begin position="38"/>
        <end position="69"/>
    </location>
</feature>
<feature type="disulfide bond" evidence="1">
    <location>
        <begin position="65"/>
        <end position="123"/>
    </location>
</feature>
<feature type="disulfide bond" evidence="1">
    <location>
        <begin position="113"/>
        <end position="132"/>
    </location>
</feature>
<feature type="sequence conflict" description="In Ref. 1; AAC46478." evidence="4" ref="1">
    <original>E</original>
    <variation>D</variation>
    <location>
        <position position="108"/>
    </location>
</feature>
<feature type="sequence conflict" description="In Ref. 1; AAC46478." evidence="4" ref="1">
    <original>D</original>
    <variation>E</variation>
    <location>
        <position position="111"/>
    </location>
</feature>
<feature type="helix" evidence="5">
    <location>
        <begin position="24"/>
        <end position="38"/>
    </location>
</feature>
<feature type="helix" evidence="5">
    <location>
        <begin position="39"/>
        <end position="42"/>
    </location>
</feature>
<feature type="helix" evidence="5">
    <location>
        <begin position="46"/>
        <end position="53"/>
    </location>
</feature>
<feature type="helix" evidence="5">
    <location>
        <begin position="61"/>
        <end position="74"/>
    </location>
</feature>
<feature type="strand" evidence="5">
    <location>
        <begin position="75"/>
        <end position="77"/>
    </location>
</feature>
<feature type="strand" evidence="5">
    <location>
        <begin position="81"/>
        <end position="83"/>
    </location>
</feature>
<feature type="helix" evidence="5">
    <location>
        <begin position="88"/>
        <end position="96"/>
    </location>
</feature>
<feature type="helix" evidence="5">
    <location>
        <begin position="100"/>
        <end position="113"/>
    </location>
</feature>
<feature type="helix" evidence="5">
    <location>
        <begin position="122"/>
        <end position="139"/>
    </location>
</feature>
<organism>
    <name type="scientific">Drosophila melanogaster</name>
    <name type="common">Fruit fly</name>
    <dbReference type="NCBI Taxonomy" id="7227"/>
    <lineage>
        <taxon>Eukaryota</taxon>
        <taxon>Metazoa</taxon>
        <taxon>Ecdysozoa</taxon>
        <taxon>Arthropoda</taxon>
        <taxon>Hexapoda</taxon>
        <taxon>Insecta</taxon>
        <taxon>Pterygota</taxon>
        <taxon>Neoptera</taxon>
        <taxon>Endopterygota</taxon>
        <taxon>Diptera</taxon>
        <taxon>Brachycera</taxon>
        <taxon>Muscomorpha</taxon>
        <taxon>Ephydroidea</taxon>
        <taxon>Drosophilidae</taxon>
        <taxon>Drosophila</taxon>
        <taxon>Sophophora</taxon>
    </lineage>
</organism>
<comment type="subcellular location">
    <subcellularLocation>
        <location evidence="4">Secreted</location>
    </subcellularLocation>
    <text evidence="4">Secreted in the lumen of olfactory hairs.</text>
</comment>
<comment type="tissue specificity">
    <text evidence="3">Expressed in antenna, mostly on the medial and posterior surface of the third antennal segment.</text>
</comment>
<keyword id="KW-0002">3D-structure</keyword>
<keyword id="KW-1015">Disulfide bond</keyword>
<keyword id="KW-1185">Reference proteome</keyword>
<keyword id="KW-0964">Secreted</keyword>
<keyword id="KW-0732">Signal</keyword>
<accession>P54195</accession>
<accession>Q4V3T8</accession>
<accession>Q9VM03</accession>
<name>OB28A_DROME</name>
<dbReference type="EMBL" id="U05985">
    <property type="protein sequence ID" value="AAC46478.1"/>
    <property type="molecule type" value="mRNA"/>
</dbReference>
<dbReference type="EMBL" id="AE014134">
    <property type="protein sequence ID" value="AAF52525.1"/>
    <property type="molecule type" value="Genomic_DNA"/>
</dbReference>
<dbReference type="EMBL" id="BT023268">
    <property type="protein sequence ID" value="AAY55684.1"/>
    <property type="molecule type" value="mRNA"/>
</dbReference>
<dbReference type="RefSeq" id="NP_523505.1">
    <property type="nucleotide sequence ID" value="NM_078781.3"/>
</dbReference>
<dbReference type="PDB" id="6QQ4">
    <property type="method" value="X-ray"/>
    <property type="resolution" value="2.00 A"/>
    <property type="chains" value="A/B=23-143"/>
</dbReference>
<dbReference type="PDBsum" id="6QQ4"/>
<dbReference type="SMR" id="P54195"/>
<dbReference type="FunCoup" id="P54195">
    <property type="interactions" value="60"/>
</dbReference>
<dbReference type="IntAct" id="P54195">
    <property type="interactions" value="4"/>
</dbReference>
<dbReference type="STRING" id="7227.FBpp0079083"/>
<dbReference type="PaxDb" id="7227-FBpp0079083"/>
<dbReference type="DNASU" id="34031"/>
<dbReference type="EnsemblMetazoa" id="FBtr0079455">
    <property type="protein sequence ID" value="FBpp0079083"/>
    <property type="gene ID" value="FBgn0011283"/>
</dbReference>
<dbReference type="GeneID" id="34031"/>
<dbReference type="KEGG" id="dme:Dmel_CG6641"/>
<dbReference type="AGR" id="FB:FBgn0011283"/>
<dbReference type="CTD" id="34031"/>
<dbReference type="FlyBase" id="FBgn0011283">
    <property type="gene designation" value="Obp28a"/>
</dbReference>
<dbReference type="VEuPathDB" id="VectorBase:FBgn0011283"/>
<dbReference type="eggNOG" id="ENOG502T2AN">
    <property type="taxonomic scope" value="Eukaryota"/>
</dbReference>
<dbReference type="GeneTree" id="ENSGT00520000058998"/>
<dbReference type="HOGENOM" id="CLU_148261_0_0_1"/>
<dbReference type="InParanoid" id="P54195"/>
<dbReference type="OMA" id="EIGDTCA"/>
<dbReference type="OrthoDB" id="6595846at2759"/>
<dbReference type="PhylomeDB" id="P54195"/>
<dbReference type="BioGRID-ORCS" id="34031">
    <property type="hits" value="0 hits in 1 CRISPR screen"/>
</dbReference>
<dbReference type="GenomeRNAi" id="34031"/>
<dbReference type="PRO" id="PR:P54195"/>
<dbReference type="Proteomes" id="UP000000803">
    <property type="component" value="Chromosome 2L"/>
</dbReference>
<dbReference type="Bgee" id="FBgn0011283">
    <property type="expression patterns" value="Expressed in epithelial cell in antenna and 80 other cell types or tissues"/>
</dbReference>
<dbReference type="GO" id="GO:0005576">
    <property type="term" value="C:extracellular region"/>
    <property type="evidence" value="ECO:0000255"/>
    <property type="project" value="FlyBase"/>
</dbReference>
<dbReference type="GO" id="GO:0005615">
    <property type="term" value="C:extracellular space"/>
    <property type="evidence" value="ECO:0000318"/>
    <property type="project" value="GO_Central"/>
</dbReference>
<dbReference type="GO" id="GO:0005549">
    <property type="term" value="F:odorant binding"/>
    <property type="evidence" value="ECO:0000250"/>
    <property type="project" value="FlyBase"/>
</dbReference>
<dbReference type="GO" id="GO:0005550">
    <property type="term" value="F:pheromone binding"/>
    <property type="evidence" value="ECO:0000250"/>
    <property type="project" value="FlyBase"/>
</dbReference>
<dbReference type="GO" id="GO:0007606">
    <property type="term" value="P:sensory perception of chemical stimulus"/>
    <property type="evidence" value="ECO:0000250"/>
    <property type="project" value="FlyBase"/>
</dbReference>
<dbReference type="GO" id="GO:0007608">
    <property type="term" value="P:sensory perception of smell"/>
    <property type="evidence" value="ECO:0000318"/>
    <property type="project" value="GO_Central"/>
</dbReference>
<dbReference type="CDD" id="cd23992">
    <property type="entry name" value="PBP_GOBP"/>
    <property type="match status" value="1"/>
</dbReference>
<dbReference type="FunFam" id="1.10.238.20:FF:000006">
    <property type="entry name" value="Odorant binding protein 15"/>
    <property type="match status" value="1"/>
</dbReference>
<dbReference type="Gene3D" id="1.10.238.20">
    <property type="entry name" value="Pheromone/general odorant binding protein domain"/>
    <property type="match status" value="1"/>
</dbReference>
<dbReference type="InterPro" id="IPR006170">
    <property type="entry name" value="PBP/GOBP"/>
</dbReference>
<dbReference type="InterPro" id="IPR036728">
    <property type="entry name" value="PBP_GOBP_sf"/>
</dbReference>
<dbReference type="PANTHER" id="PTHR11857:SF42">
    <property type="entry name" value="GENERAL ODORANT-BINDING PROTEIN 19D-RELATED"/>
    <property type="match status" value="1"/>
</dbReference>
<dbReference type="PANTHER" id="PTHR11857">
    <property type="entry name" value="ODORANT BINDING PROTEIN-RELATED"/>
    <property type="match status" value="1"/>
</dbReference>
<dbReference type="Pfam" id="PF01395">
    <property type="entry name" value="PBP_GOBP"/>
    <property type="match status" value="1"/>
</dbReference>
<dbReference type="SMART" id="SM00708">
    <property type="entry name" value="PhBP"/>
    <property type="match status" value="1"/>
</dbReference>
<dbReference type="SUPFAM" id="SSF47565">
    <property type="entry name" value="Insect pheromone/odorant-binding proteins"/>
    <property type="match status" value="1"/>
</dbReference>
<gene>
    <name type="primary">Obp28a</name>
    <name type="synonym">Pbprp5</name>
    <name type="ORF">CG6641</name>
</gene>
<sequence length="143" mass="15152">MQSTPIILVAIVLLGAALVRAFDEKEALAKLMESAESCMPEVGATDADLQEMVKKQPASTYAGKCLRACVMKNIGILDANGKLDTEAGHEKAKQYTGNDPAKLKIALEIGDTCAAITVPDDHCEAAEAYGTCFRGEAKKHGLL</sequence>
<proteinExistence type="evidence at protein level"/>
<protein>
    <recommendedName>
        <fullName>General odorant-binding protein 28a</fullName>
    </recommendedName>
    <alternativeName>
        <fullName>Odorant-binding protein 28a</fullName>
    </alternativeName>
    <alternativeName>
        <fullName>Pheromone-binding protein-related protein 5</fullName>
        <shortName>PBPRP-5</shortName>
    </alternativeName>
</protein>